<name>CDGT_BACSS</name>
<accession>P31747</accession>
<organism>
    <name type="scientific">Bacillus sp. (strain 6.6.3)</name>
    <dbReference type="NCBI Taxonomy" id="29335"/>
    <lineage>
        <taxon>Bacteria</taxon>
        <taxon>Bacillati</taxon>
        <taxon>Bacillota</taxon>
        <taxon>Bacilli</taxon>
        <taxon>Bacillales</taxon>
        <taxon>Bacillaceae</taxon>
        <taxon>Bacillus</taxon>
    </lineage>
</organism>
<comment type="catalytic activity">
    <reaction>
        <text>Cyclizes part of a (1-&gt;4)-alpha-D-glucan chain by formation of a (1-&gt;4)-alpha-D-glucosidic bond.</text>
        <dbReference type="EC" id="2.4.1.19"/>
    </reaction>
</comment>
<comment type="cofactor">
    <cofactor evidence="1">
        <name>Ca(2+)</name>
        <dbReference type="ChEBI" id="CHEBI:29108"/>
    </cofactor>
    <text evidence="1">Binds 2 calcium ions per subunit.</text>
</comment>
<comment type="subunit">
    <text>Monomer.</text>
</comment>
<comment type="subcellular location">
    <subcellularLocation>
        <location evidence="1">Secreted</location>
    </subcellularLocation>
</comment>
<comment type="domain">
    <text>May consist of two protein domains: the one in the N-terminal side cleaves the alpha-1,4-glucosidic bond in starch, and the other in the C-terminal side catalyzes other activities, including the reconstitution of an alpha-1,4-glucosidic linkage for cyclizing the maltooligosaccharide produced.</text>
</comment>
<comment type="similarity">
    <text evidence="4">Belongs to the glycosyl hydrolase 13 family.</text>
</comment>
<dbReference type="EC" id="2.4.1.19"/>
<dbReference type="EMBL" id="X66106">
    <property type="protein sequence ID" value="CAA46901.1"/>
    <property type="molecule type" value="Genomic_DNA"/>
</dbReference>
<dbReference type="PIR" id="S21532">
    <property type="entry name" value="ALBSG6"/>
</dbReference>
<dbReference type="SMR" id="P31747"/>
<dbReference type="CAZy" id="CBM20">
    <property type="family name" value="Carbohydrate-Binding Module Family 20"/>
</dbReference>
<dbReference type="CAZy" id="GH13">
    <property type="family name" value="Glycoside Hydrolase Family 13"/>
</dbReference>
<dbReference type="BRENDA" id="2.4.1.19">
    <property type="organism ID" value="691"/>
</dbReference>
<dbReference type="GO" id="GO:0005576">
    <property type="term" value="C:extracellular region"/>
    <property type="evidence" value="ECO:0007669"/>
    <property type="project" value="UniProtKB-SubCell"/>
</dbReference>
<dbReference type="GO" id="GO:0004556">
    <property type="term" value="F:alpha-amylase activity"/>
    <property type="evidence" value="ECO:0007669"/>
    <property type="project" value="InterPro"/>
</dbReference>
<dbReference type="GO" id="GO:0043895">
    <property type="term" value="F:cyclomaltodextrin glucanotransferase activity"/>
    <property type="evidence" value="ECO:0007669"/>
    <property type="project" value="UniProtKB-EC"/>
</dbReference>
<dbReference type="GO" id="GO:0046872">
    <property type="term" value="F:metal ion binding"/>
    <property type="evidence" value="ECO:0007669"/>
    <property type="project" value="UniProtKB-KW"/>
</dbReference>
<dbReference type="GO" id="GO:2001070">
    <property type="term" value="F:starch binding"/>
    <property type="evidence" value="ECO:0007669"/>
    <property type="project" value="InterPro"/>
</dbReference>
<dbReference type="GO" id="GO:0005975">
    <property type="term" value="P:carbohydrate metabolic process"/>
    <property type="evidence" value="ECO:0007669"/>
    <property type="project" value="InterPro"/>
</dbReference>
<dbReference type="CDD" id="cd11320">
    <property type="entry name" value="AmyAc_AmyMalt_CGTase_like"/>
    <property type="match status" value="1"/>
</dbReference>
<dbReference type="CDD" id="cd00604">
    <property type="entry name" value="IPT_CGTD"/>
    <property type="match status" value="1"/>
</dbReference>
<dbReference type="Gene3D" id="3.20.20.80">
    <property type="entry name" value="Glycosidases"/>
    <property type="match status" value="1"/>
</dbReference>
<dbReference type="Gene3D" id="2.60.40.1180">
    <property type="entry name" value="Golgi alpha-mannosidase II"/>
    <property type="match status" value="1"/>
</dbReference>
<dbReference type="Gene3D" id="2.60.40.10">
    <property type="entry name" value="Immunoglobulins"/>
    <property type="match status" value="2"/>
</dbReference>
<dbReference type="InterPro" id="IPR006048">
    <property type="entry name" value="A-amylase/branching_C"/>
</dbReference>
<dbReference type="InterPro" id="IPR031319">
    <property type="entry name" value="A-amylase_C"/>
</dbReference>
<dbReference type="InterPro" id="IPR006046">
    <property type="entry name" value="Alpha_amylase"/>
</dbReference>
<dbReference type="InterPro" id="IPR013784">
    <property type="entry name" value="Carb-bd-like_fold"/>
</dbReference>
<dbReference type="InterPro" id="IPR002044">
    <property type="entry name" value="CBM20"/>
</dbReference>
<dbReference type="InterPro" id="IPR006047">
    <property type="entry name" value="Glyco_hydro_13_cat_dom"/>
</dbReference>
<dbReference type="InterPro" id="IPR013780">
    <property type="entry name" value="Glyco_hydro_b"/>
</dbReference>
<dbReference type="InterPro" id="IPR017853">
    <property type="entry name" value="Glycoside_hydrolase_SF"/>
</dbReference>
<dbReference type="InterPro" id="IPR013783">
    <property type="entry name" value="Ig-like_fold"/>
</dbReference>
<dbReference type="InterPro" id="IPR014756">
    <property type="entry name" value="Ig_E-set"/>
</dbReference>
<dbReference type="InterPro" id="IPR002909">
    <property type="entry name" value="IPT_dom"/>
</dbReference>
<dbReference type="InterPro" id="IPR006311">
    <property type="entry name" value="TAT_signal"/>
</dbReference>
<dbReference type="PANTHER" id="PTHR10357:SF215">
    <property type="entry name" value="ALPHA-AMYLASE 1"/>
    <property type="match status" value="1"/>
</dbReference>
<dbReference type="PANTHER" id="PTHR10357">
    <property type="entry name" value="ALPHA-AMYLASE FAMILY MEMBER"/>
    <property type="match status" value="1"/>
</dbReference>
<dbReference type="Pfam" id="PF00128">
    <property type="entry name" value="Alpha-amylase"/>
    <property type="match status" value="1"/>
</dbReference>
<dbReference type="Pfam" id="PF02806">
    <property type="entry name" value="Alpha-amylase_C"/>
    <property type="match status" value="1"/>
</dbReference>
<dbReference type="Pfam" id="PF00686">
    <property type="entry name" value="CBM_20"/>
    <property type="match status" value="1"/>
</dbReference>
<dbReference type="Pfam" id="PF01833">
    <property type="entry name" value="TIG"/>
    <property type="match status" value="1"/>
</dbReference>
<dbReference type="PRINTS" id="PR00110">
    <property type="entry name" value="ALPHAAMYLASE"/>
</dbReference>
<dbReference type="SMART" id="SM00642">
    <property type="entry name" value="Aamy"/>
    <property type="match status" value="1"/>
</dbReference>
<dbReference type="SMART" id="SM00632">
    <property type="entry name" value="Aamy_C"/>
    <property type="match status" value="1"/>
</dbReference>
<dbReference type="SMART" id="SM01065">
    <property type="entry name" value="CBM_2"/>
    <property type="match status" value="1"/>
</dbReference>
<dbReference type="SUPFAM" id="SSF51445">
    <property type="entry name" value="(Trans)glycosidases"/>
    <property type="match status" value="1"/>
</dbReference>
<dbReference type="SUPFAM" id="SSF81296">
    <property type="entry name" value="E set domains"/>
    <property type="match status" value="1"/>
</dbReference>
<dbReference type="SUPFAM" id="SSF51011">
    <property type="entry name" value="Glycosyl hydrolase domain"/>
    <property type="match status" value="1"/>
</dbReference>
<dbReference type="SUPFAM" id="SSF49452">
    <property type="entry name" value="Starch-binding domain-like"/>
    <property type="match status" value="1"/>
</dbReference>
<dbReference type="PROSITE" id="PS51166">
    <property type="entry name" value="CBM20"/>
    <property type="match status" value="1"/>
</dbReference>
<dbReference type="PROSITE" id="PS51318">
    <property type="entry name" value="TAT"/>
    <property type="match status" value="1"/>
</dbReference>
<reference key="1">
    <citation type="submission" date="1992-05" db="EMBL/GenBank/DDBJ databases">
        <authorList>
            <person name="Akhmetzjanov A.A."/>
        </authorList>
    </citation>
    <scope>NUCLEOTIDE SEQUENCE [GENOMIC DNA]</scope>
</reference>
<gene>
    <name type="primary">cgt</name>
</gene>
<proteinExistence type="inferred from homology"/>
<protein>
    <recommendedName>
        <fullName>Cyclomaltodextrin glucanotransferase</fullName>
        <ecNumber>2.4.1.19</ecNumber>
    </recommendedName>
    <alternativeName>
        <fullName>Cyclodextrin-glycosyltransferase</fullName>
        <shortName>CGTase</shortName>
    </alternativeName>
</protein>
<evidence type="ECO:0000250" key="1"/>
<evidence type="ECO:0000255" key="2"/>
<evidence type="ECO:0000255" key="3">
    <source>
        <dbReference type="PROSITE-ProRule" id="PRU00594"/>
    </source>
</evidence>
<evidence type="ECO:0000305" key="4"/>
<keyword id="KW-0106">Calcium</keyword>
<keyword id="KW-1015">Disulfide bond</keyword>
<keyword id="KW-0328">Glycosyltransferase</keyword>
<keyword id="KW-0479">Metal-binding</keyword>
<keyword id="KW-0964">Secreted</keyword>
<keyword id="KW-0732">Signal</keyword>
<keyword id="KW-0808">Transferase</keyword>
<sequence length="718" mass="78015">MFQMAKRAFLSTTLTLGLLAGSALPFLPASAAYADPDIAVTNKQSFSTDVIYQVFTDRFLDGNPSNNPTGAAYDATCSNLKLYCGGDWQGLINKINDNYFSDLGVTALWISQPVENIFATINYSGVTNTAYHGYWARDFKKTNPYFGTMADFQNLITTAHAKGIKIIIDFAPNHTSPAMETDTSFAENGKLYDNGTLVGGYTNDTNGYFHHNGGSDFSSLENGIYKNLYDLADFNHNNATIDKYFKDAIKLWLDMGVDGIRVDAVKHIALGWQKSWMSSIYVHKPVFTFGEWFLGSAASDADNTDFANKSGMSLLDFRFNSAVRNVFRDNTSNMYALDSMINSTATDYNQVNDQVTFIDNHDMDRFKTSAVNNRRLEQALAFTLTSRGVPAIYYGTEQYLTGNGDPDNRAKMPSFSKSTTAFNVISKLAPLRKSNPAIAYGSTQQRWINNDVYVYERKFGKSVAVVAVNRNLSTPANITGLSTSLPTGSYTDVLGGVLNGNNITSSNGSVNSFTLAAGATAVWQYTAAETTPTIGHVGPVMGKPGNVVTIDGRGFGSTKGTVYFGTTAVTGAAITSWEDTQIKVTIPSVAAGNYAVKVAANGVNSNAYNHFTILTGDQVTVRFVINNASTTLGQNIYLTGNVAELGNWSTGSTAIGPAFNQVIHQYPTWYYDVSVPAGKELEFKFFKKNGSTITWEGGSNHKFTTPASGTATVTVNWQ</sequence>
<feature type="signal peptide" evidence="2">
    <location>
        <begin position="1"/>
        <end position="34"/>
    </location>
</feature>
<feature type="chain" id="PRO_0000001441" description="Cyclomaltodextrin glucanotransferase">
    <location>
        <begin position="35"/>
        <end position="718"/>
    </location>
</feature>
<feature type="domain" description="IPT/TIG">
    <location>
        <begin position="532"/>
        <end position="612"/>
    </location>
</feature>
<feature type="domain" description="CBM20" evidence="3">
    <location>
        <begin position="613"/>
        <end position="718"/>
    </location>
</feature>
<feature type="region of interest" description="A1">
    <location>
        <begin position="35"/>
        <end position="172"/>
    </location>
</feature>
<feature type="region of interest" description="B">
    <location>
        <begin position="173"/>
        <end position="236"/>
    </location>
</feature>
<feature type="region of interest" description="A2">
    <location>
        <begin position="237"/>
        <end position="440"/>
    </location>
</feature>
<feature type="region of interest" description="C">
    <location>
        <begin position="441"/>
        <end position="528"/>
    </location>
</feature>
<feature type="region of interest" description="D">
    <location>
        <begin position="529"/>
        <end position="614"/>
    </location>
</feature>
<feature type="region of interest" description="E">
    <location>
        <begin position="615"/>
        <end position="718"/>
    </location>
</feature>
<feature type="active site" description="Nucleophile" evidence="1">
    <location>
        <position position="263"/>
    </location>
</feature>
<feature type="active site" description="Proton donor" evidence="1">
    <location>
        <position position="291"/>
    </location>
</feature>
<feature type="binding site" evidence="1">
    <location>
        <position position="61"/>
    </location>
    <ligand>
        <name>Ca(2+)</name>
        <dbReference type="ChEBI" id="CHEBI:29108"/>
        <label>1</label>
    </ligand>
</feature>
<feature type="binding site" evidence="1">
    <location>
        <position position="63"/>
    </location>
    <ligand>
        <name>Ca(2+)</name>
        <dbReference type="ChEBI" id="CHEBI:29108"/>
        <label>1</label>
    </ligand>
</feature>
<feature type="binding site" evidence="1">
    <location>
        <position position="66"/>
    </location>
    <ligand>
        <name>Ca(2+)</name>
        <dbReference type="ChEBI" id="CHEBI:29108"/>
        <label>1</label>
    </ligand>
</feature>
<feature type="binding site" evidence="1">
    <location>
        <position position="67"/>
    </location>
    <ligand>
        <name>Ca(2+)</name>
        <dbReference type="ChEBI" id="CHEBI:29108"/>
        <label>1</label>
    </ligand>
</feature>
<feature type="binding site" evidence="1">
    <location>
        <position position="85"/>
    </location>
    <ligand>
        <name>Ca(2+)</name>
        <dbReference type="ChEBI" id="CHEBI:29108"/>
        <label>1</label>
    </ligand>
</feature>
<feature type="binding site" evidence="1">
    <location>
        <position position="87"/>
    </location>
    <ligand>
        <name>Ca(2+)</name>
        <dbReference type="ChEBI" id="CHEBI:29108"/>
        <label>1</label>
    </ligand>
</feature>
<feature type="binding site" evidence="1">
    <location>
        <begin position="134"/>
        <end position="135"/>
    </location>
    <ligand>
        <name>substrate</name>
    </ligand>
</feature>
<feature type="binding site" evidence="1">
    <location>
        <position position="173"/>
    </location>
    <ligand>
        <name>Ca(2+)</name>
        <dbReference type="ChEBI" id="CHEBI:29108"/>
        <label>2</label>
    </ligand>
</feature>
<feature type="binding site" evidence="1">
    <location>
        <position position="174"/>
    </location>
    <ligand>
        <name>substrate</name>
    </ligand>
</feature>
<feature type="binding site" evidence="1">
    <location>
        <position position="224"/>
    </location>
    <ligand>
        <name>Ca(2+)</name>
        <dbReference type="ChEBI" id="CHEBI:29108"/>
        <label>2</label>
    </ligand>
</feature>
<feature type="binding site" evidence="1">
    <location>
        <begin position="227"/>
        <end position="230"/>
    </location>
    <ligand>
        <name>substrate</name>
    </ligand>
</feature>
<feature type="binding site" evidence="1">
    <location>
        <position position="233"/>
    </location>
    <ligand>
        <name>Ca(2+)</name>
        <dbReference type="ChEBI" id="CHEBI:29108"/>
        <label>2</label>
    </ligand>
</feature>
<feature type="binding site" evidence="1">
    <location>
        <position position="261"/>
    </location>
    <ligand>
        <name>substrate</name>
    </ligand>
</feature>
<feature type="binding site" evidence="1">
    <location>
        <begin position="266"/>
        <end position="267"/>
    </location>
    <ligand>
        <name>substrate</name>
    </ligand>
</feature>
<feature type="binding site" evidence="1">
    <location>
        <position position="267"/>
    </location>
    <ligand>
        <name>Ca(2+)</name>
        <dbReference type="ChEBI" id="CHEBI:29108"/>
        <label>2</label>
    </ligand>
</feature>
<feature type="binding site" evidence="1">
    <location>
        <position position="361"/>
    </location>
    <ligand>
        <name>substrate</name>
    </ligand>
</feature>
<feature type="binding site" evidence="1">
    <location>
        <position position="405"/>
    </location>
    <ligand>
        <name>substrate</name>
    </ligand>
</feature>
<feature type="binding site" evidence="1">
    <location>
        <position position="409"/>
    </location>
    <ligand>
        <name>substrate</name>
    </ligand>
</feature>
<feature type="site" description="Transition state stabilizer" evidence="1">
    <location>
        <position position="362"/>
    </location>
</feature>
<feature type="disulfide bond" evidence="1">
    <location>
        <begin position="77"/>
        <end position="84"/>
    </location>
</feature>